<reference key="1">
    <citation type="journal article" date="2006" name="J. Bacteriol.">
        <title>Pathogenomic sequence analysis of Bacillus cereus and Bacillus thuringiensis isolates closely related to Bacillus anthracis.</title>
        <authorList>
            <person name="Han C.S."/>
            <person name="Xie G."/>
            <person name="Challacombe J.F."/>
            <person name="Altherr M.R."/>
            <person name="Bhotika S.S."/>
            <person name="Bruce D."/>
            <person name="Campbell C.S."/>
            <person name="Campbell M.L."/>
            <person name="Chen J."/>
            <person name="Chertkov O."/>
            <person name="Cleland C."/>
            <person name="Dimitrijevic M."/>
            <person name="Doggett N.A."/>
            <person name="Fawcett J.J."/>
            <person name="Glavina T."/>
            <person name="Goodwin L.A."/>
            <person name="Hill K.K."/>
            <person name="Hitchcock P."/>
            <person name="Jackson P.J."/>
            <person name="Keim P."/>
            <person name="Kewalramani A.R."/>
            <person name="Longmire J."/>
            <person name="Lucas S."/>
            <person name="Malfatti S."/>
            <person name="McMurry K."/>
            <person name="Meincke L.J."/>
            <person name="Misra M."/>
            <person name="Moseman B.L."/>
            <person name="Mundt M."/>
            <person name="Munk A.C."/>
            <person name="Okinaka R.T."/>
            <person name="Parson-Quintana B."/>
            <person name="Reilly L.P."/>
            <person name="Richardson P."/>
            <person name="Robinson D.L."/>
            <person name="Rubin E."/>
            <person name="Saunders E."/>
            <person name="Tapia R."/>
            <person name="Tesmer J.G."/>
            <person name="Thayer N."/>
            <person name="Thompson L.S."/>
            <person name="Tice H."/>
            <person name="Ticknor L.O."/>
            <person name="Wills P.L."/>
            <person name="Brettin T.S."/>
            <person name="Gilna P."/>
        </authorList>
    </citation>
    <scope>NUCLEOTIDE SEQUENCE [LARGE SCALE GENOMIC DNA]</scope>
    <source>
        <strain>ZK / E33L</strain>
    </source>
</reference>
<sequence>MSLLIDFIDETEEVKEEYVNLIREILGKAAQMEKIEDGAELSVTFVDNERIREINRDYRDKDQPTDVISFAMEEMGEGEMEIVGVEMPRMLGDLIISIPRAKEQAEEYGHSFDRELGFLALHGFLHLLGYDHMTEEDEKEMFGRQKEILEAFGLGR</sequence>
<protein>
    <recommendedName>
        <fullName evidence="1">Endoribonuclease YbeY</fullName>
        <ecNumber evidence="1">3.1.-.-</ecNumber>
    </recommendedName>
</protein>
<keyword id="KW-0963">Cytoplasm</keyword>
<keyword id="KW-0255">Endonuclease</keyword>
<keyword id="KW-0378">Hydrolase</keyword>
<keyword id="KW-0479">Metal-binding</keyword>
<keyword id="KW-0540">Nuclease</keyword>
<keyword id="KW-0690">Ribosome biogenesis</keyword>
<keyword id="KW-0698">rRNA processing</keyword>
<keyword id="KW-0862">Zinc</keyword>
<accession>Q634N8</accession>
<comment type="function">
    <text evidence="1">Single strand-specific metallo-endoribonuclease involved in late-stage 70S ribosome quality control and in maturation of the 3' terminus of the 16S rRNA.</text>
</comment>
<comment type="cofactor">
    <cofactor evidence="1">
        <name>Zn(2+)</name>
        <dbReference type="ChEBI" id="CHEBI:29105"/>
    </cofactor>
    <text evidence="1">Binds 1 zinc ion.</text>
</comment>
<comment type="subcellular location">
    <subcellularLocation>
        <location evidence="1">Cytoplasm</location>
    </subcellularLocation>
</comment>
<comment type="similarity">
    <text evidence="1">Belongs to the endoribonuclease YbeY family.</text>
</comment>
<proteinExistence type="inferred from homology"/>
<name>YBEY_BACCZ</name>
<gene>
    <name evidence="1" type="primary">ybeY</name>
    <name type="ordered locus">BCE33L4050</name>
</gene>
<organism>
    <name type="scientific">Bacillus cereus (strain ZK / E33L)</name>
    <dbReference type="NCBI Taxonomy" id="288681"/>
    <lineage>
        <taxon>Bacteria</taxon>
        <taxon>Bacillati</taxon>
        <taxon>Bacillota</taxon>
        <taxon>Bacilli</taxon>
        <taxon>Bacillales</taxon>
        <taxon>Bacillaceae</taxon>
        <taxon>Bacillus</taxon>
        <taxon>Bacillus cereus group</taxon>
    </lineage>
</organism>
<evidence type="ECO:0000255" key="1">
    <source>
        <dbReference type="HAMAP-Rule" id="MF_00009"/>
    </source>
</evidence>
<dbReference type="EC" id="3.1.-.-" evidence="1"/>
<dbReference type="EMBL" id="CP000001">
    <property type="protein sequence ID" value="AAU16220.1"/>
    <property type="molecule type" value="Genomic_DNA"/>
</dbReference>
<dbReference type="RefSeq" id="WP_000054692.1">
    <property type="nucleotide sequence ID" value="NZ_CP009968.1"/>
</dbReference>
<dbReference type="SMR" id="Q634N8"/>
<dbReference type="GeneID" id="93006797"/>
<dbReference type="KEGG" id="bcz:BCE33L4050"/>
<dbReference type="PATRIC" id="fig|288681.22.peg.1340"/>
<dbReference type="Proteomes" id="UP000002612">
    <property type="component" value="Chromosome"/>
</dbReference>
<dbReference type="GO" id="GO:0005737">
    <property type="term" value="C:cytoplasm"/>
    <property type="evidence" value="ECO:0007669"/>
    <property type="project" value="UniProtKB-SubCell"/>
</dbReference>
<dbReference type="GO" id="GO:0004222">
    <property type="term" value="F:metalloendopeptidase activity"/>
    <property type="evidence" value="ECO:0007669"/>
    <property type="project" value="InterPro"/>
</dbReference>
<dbReference type="GO" id="GO:0004521">
    <property type="term" value="F:RNA endonuclease activity"/>
    <property type="evidence" value="ECO:0007669"/>
    <property type="project" value="UniProtKB-UniRule"/>
</dbReference>
<dbReference type="GO" id="GO:0008270">
    <property type="term" value="F:zinc ion binding"/>
    <property type="evidence" value="ECO:0007669"/>
    <property type="project" value="UniProtKB-UniRule"/>
</dbReference>
<dbReference type="GO" id="GO:0006364">
    <property type="term" value="P:rRNA processing"/>
    <property type="evidence" value="ECO:0007669"/>
    <property type="project" value="UniProtKB-UniRule"/>
</dbReference>
<dbReference type="Gene3D" id="3.40.390.30">
    <property type="entry name" value="Metalloproteases ('zincins'), catalytic domain"/>
    <property type="match status" value="1"/>
</dbReference>
<dbReference type="HAMAP" id="MF_00009">
    <property type="entry name" value="Endoribonucl_YbeY"/>
    <property type="match status" value="1"/>
</dbReference>
<dbReference type="InterPro" id="IPR023091">
    <property type="entry name" value="MetalPrtase_cat_dom_sf_prd"/>
</dbReference>
<dbReference type="InterPro" id="IPR002036">
    <property type="entry name" value="YbeY"/>
</dbReference>
<dbReference type="InterPro" id="IPR020549">
    <property type="entry name" value="YbeY_CS"/>
</dbReference>
<dbReference type="NCBIfam" id="TIGR00043">
    <property type="entry name" value="rRNA maturation RNase YbeY"/>
    <property type="match status" value="1"/>
</dbReference>
<dbReference type="PANTHER" id="PTHR46986">
    <property type="entry name" value="ENDORIBONUCLEASE YBEY, CHLOROPLASTIC"/>
    <property type="match status" value="1"/>
</dbReference>
<dbReference type="PANTHER" id="PTHR46986:SF1">
    <property type="entry name" value="ENDORIBONUCLEASE YBEY, CHLOROPLASTIC"/>
    <property type="match status" value="1"/>
</dbReference>
<dbReference type="Pfam" id="PF02130">
    <property type="entry name" value="YbeY"/>
    <property type="match status" value="1"/>
</dbReference>
<dbReference type="SUPFAM" id="SSF55486">
    <property type="entry name" value="Metalloproteases ('zincins'), catalytic domain"/>
    <property type="match status" value="1"/>
</dbReference>
<dbReference type="PROSITE" id="PS01306">
    <property type="entry name" value="UPF0054"/>
    <property type="match status" value="1"/>
</dbReference>
<feature type="chain" id="PRO_0000102405" description="Endoribonuclease YbeY">
    <location>
        <begin position="1"/>
        <end position="156"/>
    </location>
</feature>
<feature type="binding site" evidence="1">
    <location>
        <position position="122"/>
    </location>
    <ligand>
        <name>Zn(2+)</name>
        <dbReference type="ChEBI" id="CHEBI:29105"/>
        <note>catalytic</note>
    </ligand>
</feature>
<feature type="binding site" evidence="1">
    <location>
        <position position="126"/>
    </location>
    <ligand>
        <name>Zn(2+)</name>
        <dbReference type="ChEBI" id="CHEBI:29105"/>
        <note>catalytic</note>
    </ligand>
</feature>
<feature type="binding site" evidence="1">
    <location>
        <position position="132"/>
    </location>
    <ligand>
        <name>Zn(2+)</name>
        <dbReference type="ChEBI" id="CHEBI:29105"/>
        <note>catalytic</note>
    </ligand>
</feature>